<gene>
    <name evidence="1" type="primary">garL</name>
    <name type="ordered locus">c3881</name>
</gene>
<organism>
    <name type="scientific">Escherichia coli O6:H1 (strain CFT073 / ATCC 700928 / UPEC)</name>
    <dbReference type="NCBI Taxonomy" id="199310"/>
    <lineage>
        <taxon>Bacteria</taxon>
        <taxon>Pseudomonadati</taxon>
        <taxon>Pseudomonadota</taxon>
        <taxon>Gammaproteobacteria</taxon>
        <taxon>Enterobacterales</taxon>
        <taxon>Enterobacteriaceae</taxon>
        <taxon>Escherichia</taxon>
    </lineage>
</organism>
<proteinExistence type="inferred from homology"/>
<accession>Q8FDB8</accession>
<sequence>MNNDVFPNKFKAALAAKQVQIGCWSALSNPISTEVLGLAGFDWLVLDGEHAPNDISTFIPQLMALKGSASAPVVRVPTNEPVIIKRLLDIGFYNFLIPFVETKEEAEQAVASTRYPPEGIRGVSVSHRANMFGTVADYFAQSNKNITILVQIESQQGVDNVDAIAATEGVDGIFVGPSDLAAALGHLGNASHPDVQKAIQHIFNRASAHGKPSGILAPVEADARRYLEWGATFVAVGSDLGIFRSATQKLADTFKK</sequence>
<dbReference type="EC" id="4.1.2.20" evidence="1"/>
<dbReference type="EMBL" id="AE014075">
    <property type="protein sequence ID" value="AAN82322.1"/>
    <property type="molecule type" value="Genomic_DNA"/>
</dbReference>
<dbReference type="RefSeq" id="WP_001058223.1">
    <property type="nucleotide sequence ID" value="NZ_CP051263.1"/>
</dbReference>
<dbReference type="SMR" id="Q8FDB8"/>
<dbReference type="STRING" id="199310.c3881"/>
<dbReference type="KEGG" id="ecc:c3881"/>
<dbReference type="eggNOG" id="COG3836">
    <property type="taxonomic scope" value="Bacteria"/>
</dbReference>
<dbReference type="HOGENOM" id="CLU_059964_1_0_6"/>
<dbReference type="BioCyc" id="ECOL199310:C3881-MONOMER"/>
<dbReference type="UniPathway" id="UPA00565">
    <property type="reaction ID" value="UER00630"/>
</dbReference>
<dbReference type="Proteomes" id="UP000001410">
    <property type="component" value="Chromosome"/>
</dbReference>
<dbReference type="GO" id="GO:0005737">
    <property type="term" value="C:cytoplasm"/>
    <property type="evidence" value="ECO:0007669"/>
    <property type="project" value="TreeGrafter"/>
</dbReference>
<dbReference type="GO" id="GO:0008672">
    <property type="term" value="F:2-dehydro-3-deoxyglucarate aldolase activity"/>
    <property type="evidence" value="ECO:0007669"/>
    <property type="project" value="UniProtKB-UniRule"/>
</dbReference>
<dbReference type="GO" id="GO:0000287">
    <property type="term" value="F:magnesium ion binding"/>
    <property type="evidence" value="ECO:0007669"/>
    <property type="project" value="UniProtKB-UniRule"/>
</dbReference>
<dbReference type="GO" id="GO:0042838">
    <property type="term" value="P:D-glucarate catabolic process"/>
    <property type="evidence" value="ECO:0007669"/>
    <property type="project" value="UniProtKB-UniRule"/>
</dbReference>
<dbReference type="GO" id="GO:0046392">
    <property type="term" value="P:galactarate catabolic process"/>
    <property type="evidence" value="ECO:0007669"/>
    <property type="project" value="UniProtKB-UniRule"/>
</dbReference>
<dbReference type="FunFam" id="3.20.20.60:FF:000004">
    <property type="entry name" value="5-keto-4-deoxy-D-glucarate aldolase"/>
    <property type="match status" value="1"/>
</dbReference>
<dbReference type="Gene3D" id="3.20.20.60">
    <property type="entry name" value="Phosphoenolpyruvate-binding domains"/>
    <property type="match status" value="1"/>
</dbReference>
<dbReference type="HAMAP" id="MF_01291">
    <property type="entry name" value="KDGluc_aldolase"/>
    <property type="match status" value="1"/>
</dbReference>
<dbReference type="InterPro" id="IPR005000">
    <property type="entry name" value="Aldolase/citrate-lyase_domain"/>
</dbReference>
<dbReference type="InterPro" id="IPR017648">
    <property type="entry name" value="GarL"/>
</dbReference>
<dbReference type="InterPro" id="IPR050251">
    <property type="entry name" value="HpcH-HpaI_aldolase"/>
</dbReference>
<dbReference type="InterPro" id="IPR015813">
    <property type="entry name" value="Pyrv/PenolPyrv_kinase-like_dom"/>
</dbReference>
<dbReference type="InterPro" id="IPR040442">
    <property type="entry name" value="Pyrv_kinase-like_dom_sf"/>
</dbReference>
<dbReference type="NCBIfam" id="TIGR03239">
    <property type="entry name" value="GarL"/>
    <property type="match status" value="1"/>
</dbReference>
<dbReference type="NCBIfam" id="NF007849">
    <property type="entry name" value="PRK10558.1"/>
    <property type="match status" value="1"/>
</dbReference>
<dbReference type="PANTHER" id="PTHR30502">
    <property type="entry name" value="2-KETO-3-DEOXY-L-RHAMNONATE ALDOLASE"/>
    <property type="match status" value="1"/>
</dbReference>
<dbReference type="PANTHER" id="PTHR30502:SF4">
    <property type="entry name" value="5-KETO-4-DEOXY-D-GLUCARATE ALDOLASE"/>
    <property type="match status" value="1"/>
</dbReference>
<dbReference type="Pfam" id="PF03328">
    <property type="entry name" value="HpcH_HpaI"/>
    <property type="match status" value="1"/>
</dbReference>
<dbReference type="SUPFAM" id="SSF51621">
    <property type="entry name" value="Phosphoenolpyruvate/pyruvate domain"/>
    <property type="match status" value="1"/>
</dbReference>
<feature type="chain" id="PRO_0000353149" description="5-keto-4-deoxy-D-glucarate aldolase">
    <location>
        <begin position="1"/>
        <end position="256"/>
    </location>
</feature>
<feature type="active site" description="Proton acceptor" evidence="1">
    <location>
        <position position="50"/>
    </location>
</feature>
<feature type="binding site" evidence="1">
    <location>
        <position position="151"/>
    </location>
    <ligand>
        <name>substrate</name>
    </ligand>
</feature>
<feature type="binding site" evidence="1">
    <location>
        <position position="153"/>
    </location>
    <ligand>
        <name>Mg(2+)</name>
        <dbReference type="ChEBI" id="CHEBI:18420"/>
    </ligand>
</feature>
<feature type="binding site" evidence="1">
    <location>
        <position position="178"/>
    </location>
    <ligand>
        <name>substrate</name>
    </ligand>
</feature>
<feature type="binding site" evidence="1">
    <location>
        <position position="179"/>
    </location>
    <ligand>
        <name>Mg(2+)</name>
        <dbReference type="ChEBI" id="CHEBI:18420"/>
    </ligand>
</feature>
<feature type="binding site" evidence="1">
    <location>
        <position position="179"/>
    </location>
    <ligand>
        <name>substrate</name>
    </ligand>
</feature>
<feature type="site" description="Transition state stabilizer" evidence="1">
    <location>
        <position position="75"/>
    </location>
</feature>
<feature type="site" description="Increases basicity of active site His" evidence="1">
    <location>
        <position position="89"/>
    </location>
</feature>
<evidence type="ECO:0000255" key="1">
    <source>
        <dbReference type="HAMAP-Rule" id="MF_01291"/>
    </source>
</evidence>
<protein>
    <recommendedName>
        <fullName evidence="1">5-keto-4-deoxy-D-glucarate aldolase</fullName>
        <shortName evidence="1">KDGluc aldolase</shortName>
        <shortName evidence="1">KDGlucA</shortName>
        <ecNumber evidence="1">4.1.2.20</ecNumber>
    </recommendedName>
    <alternativeName>
        <fullName evidence="1">2-dehydro-3-deoxy-D-glucarate aldolase</fullName>
    </alternativeName>
    <alternativeName>
        <fullName evidence="1">2-keto-3-deoxy-D-glucarate aldolase</fullName>
    </alternativeName>
    <alternativeName>
        <fullName evidence="1">5-dehydro-4-deoxy-D-glucarate aldolase</fullName>
    </alternativeName>
    <alternativeName>
        <fullName evidence="1">Alpha-keto-beta-deoxy-D-glucarate aldolase</fullName>
    </alternativeName>
</protein>
<comment type="function">
    <text evidence="1">Catalyzes the reversible retro-aldol cleavage of both 5-keto-4-deoxy-D-glucarate and 2-keto-3-deoxy-D-glucarate to pyruvate and tartronic semialdehyde.</text>
</comment>
<comment type="catalytic activity">
    <reaction evidence="1">
        <text>5-dehydro-4-deoxy-D-glucarate = 2-hydroxy-3-oxopropanoate + pyruvate</text>
        <dbReference type="Rhea" id="RHEA:27726"/>
        <dbReference type="ChEBI" id="CHEBI:15361"/>
        <dbReference type="ChEBI" id="CHEBI:42819"/>
        <dbReference type="ChEBI" id="CHEBI:57978"/>
    </reaction>
</comment>
<comment type="catalytic activity">
    <reaction evidence="1">
        <text>2-dehydro-3-deoxy-D-glucarate = 2-hydroxy-3-oxopropanoate + pyruvate</text>
        <dbReference type="Rhea" id="RHEA:10268"/>
        <dbReference type="ChEBI" id="CHEBI:15361"/>
        <dbReference type="ChEBI" id="CHEBI:57978"/>
        <dbReference type="ChEBI" id="CHEBI:58098"/>
        <dbReference type="EC" id="4.1.2.20"/>
    </reaction>
</comment>
<comment type="cofactor">
    <cofactor evidence="1">
        <name>Mg(2+)</name>
        <dbReference type="ChEBI" id="CHEBI:18420"/>
    </cofactor>
    <text evidence="1">Binds 1 Mg(2+) ion per subunit.</text>
</comment>
<comment type="pathway">
    <text evidence="1">Carbohydrate acid metabolism; galactarate degradation; D-glycerate from galactarate: step 2/3.</text>
</comment>
<comment type="subunit">
    <text evidence="1">Homohexamer; trimer of dimers.</text>
</comment>
<comment type="similarity">
    <text evidence="1">Belongs to the HpcH/HpaI aldolase family. KDGluc aldolase subfamily.</text>
</comment>
<keyword id="KW-0456">Lyase</keyword>
<keyword id="KW-0460">Magnesium</keyword>
<keyword id="KW-0479">Metal-binding</keyword>
<keyword id="KW-1185">Reference proteome</keyword>
<reference key="1">
    <citation type="journal article" date="2002" name="Proc. Natl. Acad. Sci. U.S.A.">
        <title>Extensive mosaic structure revealed by the complete genome sequence of uropathogenic Escherichia coli.</title>
        <authorList>
            <person name="Welch R.A."/>
            <person name="Burland V."/>
            <person name="Plunkett G. III"/>
            <person name="Redford P."/>
            <person name="Roesch P."/>
            <person name="Rasko D."/>
            <person name="Buckles E.L."/>
            <person name="Liou S.-R."/>
            <person name="Boutin A."/>
            <person name="Hackett J."/>
            <person name="Stroud D."/>
            <person name="Mayhew G.F."/>
            <person name="Rose D.J."/>
            <person name="Zhou S."/>
            <person name="Schwartz D.C."/>
            <person name="Perna N.T."/>
            <person name="Mobley H.L.T."/>
            <person name="Donnenberg M.S."/>
            <person name="Blattner F.R."/>
        </authorList>
    </citation>
    <scope>NUCLEOTIDE SEQUENCE [LARGE SCALE GENOMIC DNA]</scope>
    <source>
        <strain>CFT073 / ATCC 700928 / UPEC</strain>
    </source>
</reference>
<name>GARL_ECOL6</name>